<organism>
    <name type="scientific">Pasteurella multocida (strain Pm70)</name>
    <dbReference type="NCBI Taxonomy" id="272843"/>
    <lineage>
        <taxon>Bacteria</taxon>
        <taxon>Pseudomonadati</taxon>
        <taxon>Pseudomonadota</taxon>
        <taxon>Gammaproteobacteria</taxon>
        <taxon>Pasteurellales</taxon>
        <taxon>Pasteurellaceae</taxon>
        <taxon>Pasteurella</taxon>
    </lineage>
</organism>
<protein>
    <recommendedName>
        <fullName>Translation initiation factor IF-2</fullName>
    </recommendedName>
</protein>
<comment type="function">
    <text evidence="1">One of the essential components for the initiation of protein synthesis. Protects formylmethionyl-tRNA from spontaneous hydrolysis and promotes its binding to the 30S ribosomal subunits. Also involved in the hydrolysis of GTP during the formation of the 70S ribosomal complex (By similarity).</text>
</comment>
<comment type="subcellular location">
    <subcellularLocation>
        <location evidence="1">Cytoplasm</location>
    </subcellularLocation>
</comment>
<comment type="similarity">
    <text evidence="3">Belongs to the TRAFAC class translation factor GTPase superfamily. Classic translation factor GTPase family. IF-2 subfamily.</text>
</comment>
<evidence type="ECO:0000250" key="1"/>
<evidence type="ECO:0000256" key="2">
    <source>
        <dbReference type="SAM" id="MobiDB-lite"/>
    </source>
</evidence>
<evidence type="ECO:0000305" key="3"/>
<name>IF2_PASMU</name>
<gene>
    <name type="primary">infB</name>
    <name type="ordered locus">PM0759</name>
</gene>
<proteinExistence type="inferred from homology"/>
<reference key="1">
    <citation type="journal article" date="2001" name="Proc. Natl. Acad. Sci. U.S.A.">
        <title>Complete genomic sequence of Pasteurella multocida Pm70.</title>
        <authorList>
            <person name="May B.J."/>
            <person name="Zhang Q."/>
            <person name="Li L.L."/>
            <person name="Paustian M.L."/>
            <person name="Whittam T.S."/>
            <person name="Kapur V."/>
        </authorList>
    </citation>
    <scope>NUCLEOTIDE SEQUENCE [LARGE SCALE GENOMIC DNA]</scope>
    <source>
        <strain>Pm70</strain>
    </source>
</reference>
<dbReference type="EMBL" id="AE004439">
    <property type="protein sequence ID" value="AAK02843.1"/>
    <property type="molecule type" value="Genomic_DNA"/>
</dbReference>
<dbReference type="RefSeq" id="WP_005726750.1">
    <property type="nucleotide sequence ID" value="NC_002663.1"/>
</dbReference>
<dbReference type="SMR" id="P57873"/>
<dbReference type="STRING" id="272843.PM0759"/>
<dbReference type="EnsemblBacteria" id="AAK02843">
    <property type="protein sequence ID" value="AAK02843"/>
    <property type="gene ID" value="PM0759"/>
</dbReference>
<dbReference type="GeneID" id="77207813"/>
<dbReference type="KEGG" id="pmu:PM0759"/>
<dbReference type="PATRIC" id="fig|272843.6.peg.768"/>
<dbReference type="HOGENOM" id="CLU_006301_6_3_6"/>
<dbReference type="OrthoDB" id="9811804at2"/>
<dbReference type="Proteomes" id="UP000000809">
    <property type="component" value="Chromosome"/>
</dbReference>
<dbReference type="GO" id="GO:0005829">
    <property type="term" value="C:cytosol"/>
    <property type="evidence" value="ECO:0007669"/>
    <property type="project" value="TreeGrafter"/>
</dbReference>
<dbReference type="GO" id="GO:0005525">
    <property type="term" value="F:GTP binding"/>
    <property type="evidence" value="ECO:0007669"/>
    <property type="project" value="UniProtKB-KW"/>
</dbReference>
<dbReference type="GO" id="GO:0003924">
    <property type="term" value="F:GTPase activity"/>
    <property type="evidence" value="ECO:0007669"/>
    <property type="project" value="UniProtKB-UniRule"/>
</dbReference>
<dbReference type="GO" id="GO:0097216">
    <property type="term" value="F:guanosine tetraphosphate binding"/>
    <property type="evidence" value="ECO:0007669"/>
    <property type="project" value="UniProtKB-ARBA"/>
</dbReference>
<dbReference type="GO" id="GO:0003743">
    <property type="term" value="F:translation initiation factor activity"/>
    <property type="evidence" value="ECO:0007669"/>
    <property type="project" value="UniProtKB-UniRule"/>
</dbReference>
<dbReference type="CDD" id="cd01887">
    <property type="entry name" value="IF2_eIF5B"/>
    <property type="match status" value="1"/>
</dbReference>
<dbReference type="CDD" id="cd03702">
    <property type="entry name" value="IF2_mtIF2_II"/>
    <property type="match status" value="1"/>
</dbReference>
<dbReference type="CDD" id="cd03692">
    <property type="entry name" value="mtIF2_IVc"/>
    <property type="match status" value="1"/>
</dbReference>
<dbReference type="FunFam" id="2.40.30.10:FF:000007">
    <property type="entry name" value="Translation initiation factor IF-2"/>
    <property type="match status" value="1"/>
</dbReference>
<dbReference type="FunFam" id="2.40.30.10:FF:000008">
    <property type="entry name" value="Translation initiation factor IF-2"/>
    <property type="match status" value="1"/>
</dbReference>
<dbReference type="FunFam" id="3.40.50.10050:FF:000001">
    <property type="entry name" value="Translation initiation factor IF-2"/>
    <property type="match status" value="1"/>
</dbReference>
<dbReference type="FunFam" id="3.40.50.300:FF:000019">
    <property type="entry name" value="Translation initiation factor IF-2"/>
    <property type="match status" value="1"/>
</dbReference>
<dbReference type="Gene3D" id="3.40.50.300">
    <property type="entry name" value="P-loop containing nucleotide triphosphate hydrolases"/>
    <property type="match status" value="1"/>
</dbReference>
<dbReference type="Gene3D" id="2.40.30.10">
    <property type="entry name" value="Translation factors"/>
    <property type="match status" value="2"/>
</dbReference>
<dbReference type="Gene3D" id="3.40.50.10050">
    <property type="entry name" value="Translation initiation factor IF- 2, domain 3"/>
    <property type="match status" value="1"/>
</dbReference>
<dbReference type="HAMAP" id="MF_00100_B">
    <property type="entry name" value="IF_2_B"/>
    <property type="match status" value="1"/>
</dbReference>
<dbReference type="InterPro" id="IPR053905">
    <property type="entry name" value="EF-G-like_DII"/>
</dbReference>
<dbReference type="InterPro" id="IPR004161">
    <property type="entry name" value="EFTu-like_2"/>
</dbReference>
<dbReference type="InterPro" id="IPR013575">
    <property type="entry name" value="IF2_assoc_dom_bac"/>
</dbReference>
<dbReference type="InterPro" id="IPR044145">
    <property type="entry name" value="IF2_II"/>
</dbReference>
<dbReference type="InterPro" id="IPR006847">
    <property type="entry name" value="IF2_N"/>
</dbReference>
<dbReference type="InterPro" id="IPR027417">
    <property type="entry name" value="P-loop_NTPase"/>
</dbReference>
<dbReference type="InterPro" id="IPR005225">
    <property type="entry name" value="Small_GTP-bd"/>
</dbReference>
<dbReference type="InterPro" id="IPR000795">
    <property type="entry name" value="T_Tr_GTP-bd_dom"/>
</dbReference>
<dbReference type="InterPro" id="IPR000178">
    <property type="entry name" value="TF_IF2_bacterial-like"/>
</dbReference>
<dbReference type="InterPro" id="IPR015760">
    <property type="entry name" value="TIF_IF2"/>
</dbReference>
<dbReference type="InterPro" id="IPR023115">
    <property type="entry name" value="TIF_IF2_dom3"/>
</dbReference>
<dbReference type="InterPro" id="IPR036925">
    <property type="entry name" value="TIF_IF2_dom3_sf"/>
</dbReference>
<dbReference type="InterPro" id="IPR009000">
    <property type="entry name" value="Transl_B-barrel_sf"/>
</dbReference>
<dbReference type="NCBIfam" id="TIGR00487">
    <property type="entry name" value="IF-2"/>
    <property type="match status" value="1"/>
</dbReference>
<dbReference type="NCBIfam" id="TIGR00231">
    <property type="entry name" value="small_GTP"/>
    <property type="match status" value="1"/>
</dbReference>
<dbReference type="PANTHER" id="PTHR43381:SF5">
    <property type="entry name" value="TR-TYPE G DOMAIN-CONTAINING PROTEIN"/>
    <property type="match status" value="1"/>
</dbReference>
<dbReference type="PANTHER" id="PTHR43381">
    <property type="entry name" value="TRANSLATION INITIATION FACTOR IF-2-RELATED"/>
    <property type="match status" value="1"/>
</dbReference>
<dbReference type="Pfam" id="PF22042">
    <property type="entry name" value="EF-G_D2"/>
    <property type="match status" value="1"/>
</dbReference>
<dbReference type="Pfam" id="PF00009">
    <property type="entry name" value="GTP_EFTU"/>
    <property type="match status" value="1"/>
</dbReference>
<dbReference type="Pfam" id="PF03144">
    <property type="entry name" value="GTP_EFTU_D2"/>
    <property type="match status" value="1"/>
</dbReference>
<dbReference type="Pfam" id="PF11987">
    <property type="entry name" value="IF-2"/>
    <property type="match status" value="1"/>
</dbReference>
<dbReference type="Pfam" id="PF08364">
    <property type="entry name" value="IF2_assoc"/>
    <property type="match status" value="1"/>
</dbReference>
<dbReference type="Pfam" id="PF04760">
    <property type="entry name" value="IF2_N"/>
    <property type="match status" value="1"/>
</dbReference>
<dbReference type="SUPFAM" id="SSF52156">
    <property type="entry name" value="Initiation factor IF2/eIF5b, domain 3"/>
    <property type="match status" value="1"/>
</dbReference>
<dbReference type="SUPFAM" id="SSF52540">
    <property type="entry name" value="P-loop containing nucleoside triphosphate hydrolases"/>
    <property type="match status" value="1"/>
</dbReference>
<dbReference type="SUPFAM" id="SSF50447">
    <property type="entry name" value="Translation proteins"/>
    <property type="match status" value="2"/>
</dbReference>
<dbReference type="PROSITE" id="PS51722">
    <property type="entry name" value="G_TR_2"/>
    <property type="match status" value="1"/>
</dbReference>
<dbReference type="PROSITE" id="PS01176">
    <property type="entry name" value="IF2"/>
    <property type="match status" value="1"/>
</dbReference>
<feature type="chain" id="PRO_0000137230" description="Translation initiation factor IF-2">
    <location>
        <begin position="1"/>
        <end position="833"/>
    </location>
</feature>
<feature type="domain" description="tr-type G">
    <location>
        <begin position="333"/>
        <end position="502"/>
    </location>
</feature>
<feature type="region of interest" description="Disordered" evidence="2">
    <location>
        <begin position="1"/>
        <end position="247"/>
    </location>
</feature>
<feature type="region of interest" description="G1" evidence="1">
    <location>
        <begin position="342"/>
        <end position="349"/>
    </location>
</feature>
<feature type="region of interest" description="G2" evidence="1">
    <location>
        <begin position="367"/>
        <end position="371"/>
    </location>
</feature>
<feature type="region of interest" description="G3" evidence="1">
    <location>
        <begin position="388"/>
        <end position="391"/>
    </location>
</feature>
<feature type="region of interest" description="G4" evidence="1">
    <location>
        <begin position="442"/>
        <end position="445"/>
    </location>
</feature>
<feature type="region of interest" description="G5" evidence="1">
    <location>
        <begin position="478"/>
        <end position="480"/>
    </location>
</feature>
<feature type="compositionally biased region" description="Basic and acidic residues" evidence="2">
    <location>
        <begin position="53"/>
        <end position="99"/>
    </location>
</feature>
<feature type="compositionally biased region" description="Basic and acidic residues" evidence="2">
    <location>
        <begin position="110"/>
        <end position="152"/>
    </location>
</feature>
<feature type="compositionally biased region" description="Acidic residues" evidence="2">
    <location>
        <begin position="153"/>
        <end position="166"/>
    </location>
</feature>
<feature type="compositionally biased region" description="Basic residues" evidence="2">
    <location>
        <begin position="187"/>
        <end position="203"/>
    </location>
</feature>
<feature type="compositionally biased region" description="Basic and acidic residues" evidence="2">
    <location>
        <begin position="204"/>
        <end position="227"/>
    </location>
</feature>
<feature type="binding site" evidence="1">
    <location>
        <begin position="342"/>
        <end position="349"/>
    </location>
    <ligand>
        <name>GTP</name>
        <dbReference type="ChEBI" id="CHEBI:37565"/>
    </ligand>
</feature>
<feature type="binding site" evidence="1">
    <location>
        <begin position="388"/>
        <end position="392"/>
    </location>
    <ligand>
        <name>GTP</name>
        <dbReference type="ChEBI" id="CHEBI:37565"/>
    </ligand>
</feature>
<feature type="binding site" evidence="1">
    <location>
        <begin position="442"/>
        <end position="445"/>
    </location>
    <ligand>
        <name>GTP</name>
        <dbReference type="ChEBI" id="CHEBI:37565"/>
    </ligand>
</feature>
<sequence>MTEDVKKADGAAPKKLSLQRRTKTTVSTTAGGKAKEVQVEVRKKRTVPTDAAQKAEEARLKAKQEADRLAAEKAKKDAEEKARLEAEKAKQAKAEEAKKAQAVSAPTKAVDVEKEKRRAEEAELRRKADELARQKAEELARKAAEEAKRYAELSEEDAENENSEDYADYHLTSTYAREAEDEEARRKENRNRGGKNKVAKAKKGGREDESSKTERESNRRNQKDGKMGKGKHAKKGSALQQAFTKPAQAVNRDVVIGETITVAELANKMAVKATEVIKTMMKMGAMATINQVIDQETAQLVAEEMGHKVIIRKENELEESVMSDRDVDAELVTRAPVVTIMGHVDHGKTSLLDYIRKAKVASGEAGGITQHIGAYHVETDGKMITFLDTPGHAAFTSMRARGAKATDIVVLVVAADDGVMPQTIEAIQHAKAAGVPIVVAVNKIDKPEANPERVETELLQHEVVAEKFGGDTQFVYVSAKKGTGVDELLEAILLQSEVLELTAVKDGMATGVVIESYLDKGRGPVATILVQTGTLHRGDIVLCGFEYGRVRAMRNENGKDVASAGPSIPVEVLGLSGVPAAGDEATVVRDEKKAREVALYRQGKFREVKLARQQKAKLENMFTNMAEGDVAELNVIVKADVQGSVEAICQSLNELSTAEVKVKVVGSGVGGITETDATLAAASNAIVLGFNVRADASARRIIESESIDLRYYSIIYELLNEIKAAMSGMLQPEFKQEIIGLAEVRDVFRHPKFGAIAGCMVTEGIVKRNNPIRVLRDNVVIFEGELESLRRFKDDVAEVRNGMECGIGVKNYNDVKVGDQIEVFEVVEIKRTI</sequence>
<keyword id="KW-0963">Cytoplasm</keyword>
<keyword id="KW-0342">GTP-binding</keyword>
<keyword id="KW-0396">Initiation factor</keyword>
<keyword id="KW-0547">Nucleotide-binding</keyword>
<keyword id="KW-0648">Protein biosynthesis</keyword>
<keyword id="KW-1185">Reference proteome</keyword>
<accession>P57873</accession>